<protein>
    <recommendedName>
        <fullName>RNA polymerase II subunit A C-terminal domain phosphatase SSU72</fullName>
        <shortName>CTD phosphatase SSU72</shortName>
        <ecNumber>3.1.3.16</ecNumber>
    </recommendedName>
</protein>
<proteinExistence type="evidence at protein level"/>
<name>SSU72_MOUSE</name>
<reference key="1">
    <citation type="journal article" date="2005" name="Science">
        <title>The transcriptional landscape of the mammalian genome.</title>
        <authorList>
            <person name="Carninci P."/>
            <person name="Kasukawa T."/>
            <person name="Katayama S."/>
            <person name="Gough J."/>
            <person name="Frith M.C."/>
            <person name="Maeda N."/>
            <person name="Oyama R."/>
            <person name="Ravasi T."/>
            <person name="Lenhard B."/>
            <person name="Wells C."/>
            <person name="Kodzius R."/>
            <person name="Shimokawa K."/>
            <person name="Bajic V.B."/>
            <person name="Brenner S.E."/>
            <person name="Batalov S."/>
            <person name="Forrest A.R."/>
            <person name="Zavolan M."/>
            <person name="Davis M.J."/>
            <person name="Wilming L.G."/>
            <person name="Aidinis V."/>
            <person name="Allen J.E."/>
            <person name="Ambesi-Impiombato A."/>
            <person name="Apweiler R."/>
            <person name="Aturaliya R.N."/>
            <person name="Bailey T.L."/>
            <person name="Bansal M."/>
            <person name="Baxter L."/>
            <person name="Beisel K.W."/>
            <person name="Bersano T."/>
            <person name="Bono H."/>
            <person name="Chalk A.M."/>
            <person name="Chiu K.P."/>
            <person name="Choudhary V."/>
            <person name="Christoffels A."/>
            <person name="Clutterbuck D.R."/>
            <person name="Crowe M.L."/>
            <person name="Dalla E."/>
            <person name="Dalrymple B.P."/>
            <person name="de Bono B."/>
            <person name="Della Gatta G."/>
            <person name="di Bernardo D."/>
            <person name="Down T."/>
            <person name="Engstrom P."/>
            <person name="Fagiolini M."/>
            <person name="Faulkner G."/>
            <person name="Fletcher C.F."/>
            <person name="Fukushima T."/>
            <person name="Furuno M."/>
            <person name="Futaki S."/>
            <person name="Gariboldi M."/>
            <person name="Georgii-Hemming P."/>
            <person name="Gingeras T.R."/>
            <person name="Gojobori T."/>
            <person name="Green R.E."/>
            <person name="Gustincich S."/>
            <person name="Harbers M."/>
            <person name="Hayashi Y."/>
            <person name="Hensch T.K."/>
            <person name="Hirokawa N."/>
            <person name="Hill D."/>
            <person name="Huminiecki L."/>
            <person name="Iacono M."/>
            <person name="Ikeo K."/>
            <person name="Iwama A."/>
            <person name="Ishikawa T."/>
            <person name="Jakt M."/>
            <person name="Kanapin A."/>
            <person name="Katoh M."/>
            <person name="Kawasawa Y."/>
            <person name="Kelso J."/>
            <person name="Kitamura H."/>
            <person name="Kitano H."/>
            <person name="Kollias G."/>
            <person name="Krishnan S.P."/>
            <person name="Kruger A."/>
            <person name="Kummerfeld S.K."/>
            <person name="Kurochkin I.V."/>
            <person name="Lareau L.F."/>
            <person name="Lazarevic D."/>
            <person name="Lipovich L."/>
            <person name="Liu J."/>
            <person name="Liuni S."/>
            <person name="McWilliam S."/>
            <person name="Madan Babu M."/>
            <person name="Madera M."/>
            <person name="Marchionni L."/>
            <person name="Matsuda H."/>
            <person name="Matsuzawa S."/>
            <person name="Miki H."/>
            <person name="Mignone F."/>
            <person name="Miyake S."/>
            <person name="Morris K."/>
            <person name="Mottagui-Tabar S."/>
            <person name="Mulder N."/>
            <person name="Nakano N."/>
            <person name="Nakauchi H."/>
            <person name="Ng P."/>
            <person name="Nilsson R."/>
            <person name="Nishiguchi S."/>
            <person name="Nishikawa S."/>
            <person name="Nori F."/>
            <person name="Ohara O."/>
            <person name="Okazaki Y."/>
            <person name="Orlando V."/>
            <person name="Pang K.C."/>
            <person name="Pavan W.J."/>
            <person name="Pavesi G."/>
            <person name="Pesole G."/>
            <person name="Petrovsky N."/>
            <person name="Piazza S."/>
            <person name="Reed J."/>
            <person name="Reid J.F."/>
            <person name="Ring B.Z."/>
            <person name="Ringwald M."/>
            <person name="Rost B."/>
            <person name="Ruan Y."/>
            <person name="Salzberg S.L."/>
            <person name="Sandelin A."/>
            <person name="Schneider C."/>
            <person name="Schoenbach C."/>
            <person name="Sekiguchi K."/>
            <person name="Semple C.A."/>
            <person name="Seno S."/>
            <person name="Sessa L."/>
            <person name="Sheng Y."/>
            <person name="Shibata Y."/>
            <person name="Shimada H."/>
            <person name="Shimada K."/>
            <person name="Silva D."/>
            <person name="Sinclair B."/>
            <person name="Sperling S."/>
            <person name="Stupka E."/>
            <person name="Sugiura K."/>
            <person name="Sultana R."/>
            <person name="Takenaka Y."/>
            <person name="Taki K."/>
            <person name="Tammoja K."/>
            <person name="Tan S.L."/>
            <person name="Tang S."/>
            <person name="Taylor M.S."/>
            <person name="Tegner J."/>
            <person name="Teichmann S.A."/>
            <person name="Ueda H.R."/>
            <person name="van Nimwegen E."/>
            <person name="Verardo R."/>
            <person name="Wei C.L."/>
            <person name="Yagi K."/>
            <person name="Yamanishi H."/>
            <person name="Zabarovsky E."/>
            <person name="Zhu S."/>
            <person name="Zimmer A."/>
            <person name="Hide W."/>
            <person name="Bult C."/>
            <person name="Grimmond S.M."/>
            <person name="Teasdale R.D."/>
            <person name="Liu E.T."/>
            <person name="Brusic V."/>
            <person name="Quackenbush J."/>
            <person name="Wahlestedt C."/>
            <person name="Mattick J.S."/>
            <person name="Hume D.A."/>
            <person name="Kai C."/>
            <person name="Sasaki D."/>
            <person name="Tomaru Y."/>
            <person name="Fukuda S."/>
            <person name="Kanamori-Katayama M."/>
            <person name="Suzuki M."/>
            <person name="Aoki J."/>
            <person name="Arakawa T."/>
            <person name="Iida J."/>
            <person name="Imamura K."/>
            <person name="Itoh M."/>
            <person name="Kato T."/>
            <person name="Kawaji H."/>
            <person name="Kawagashira N."/>
            <person name="Kawashima T."/>
            <person name="Kojima M."/>
            <person name="Kondo S."/>
            <person name="Konno H."/>
            <person name="Nakano K."/>
            <person name="Ninomiya N."/>
            <person name="Nishio T."/>
            <person name="Okada M."/>
            <person name="Plessy C."/>
            <person name="Shibata K."/>
            <person name="Shiraki T."/>
            <person name="Suzuki S."/>
            <person name="Tagami M."/>
            <person name="Waki K."/>
            <person name="Watahiki A."/>
            <person name="Okamura-Oho Y."/>
            <person name="Suzuki H."/>
            <person name="Kawai J."/>
            <person name="Hayashizaki Y."/>
        </authorList>
    </citation>
    <scope>NUCLEOTIDE SEQUENCE [LARGE SCALE MRNA] (ISOFORM 1)</scope>
    <source>
        <strain>C57BL/6J</strain>
        <tissue>Cerebellum</tissue>
        <tissue>Embryo</tissue>
        <tissue>Sympathetic ganglion</tissue>
    </source>
</reference>
<reference key="2">
    <citation type="journal article" date="2009" name="PLoS Biol.">
        <title>Lineage-specific biology revealed by a finished genome assembly of the mouse.</title>
        <authorList>
            <person name="Church D.M."/>
            <person name="Goodstadt L."/>
            <person name="Hillier L.W."/>
            <person name="Zody M.C."/>
            <person name="Goldstein S."/>
            <person name="She X."/>
            <person name="Bult C.J."/>
            <person name="Agarwala R."/>
            <person name="Cherry J.L."/>
            <person name="DiCuccio M."/>
            <person name="Hlavina W."/>
            <person name="Kapustin Y."/>
            <person name="Meric P."/>
            <person name="Maglott D."/>
            <person name="Birtle Z."/>
            <person name="Marques A.C."/>
            <person name="Graves T."/>
            <person name="Zhou S."/>
            <person name="Teague B."/>
            <person name="Potamousis K."/>
            <person name="Churas C."/>
            <person name="Place M."/>
            <person name="Herschleb J."/>
            <person name="Runnheim R."/>
            <person name="Forrest D."/>
            <person name="Amos-Landgraf J."/>
            <person name="Schwartz D.C."/>
            <person name="Cheng Z."/>
            <person name="Lindblad-Toh K."/>
            <person name="Eichler E.E."/>
            <person name="Ponting C.P."/>
        </authorList>
    </citation>
    <scope>NUCLEOTIDE SEQUENCE [LARGE SCALE GENOMIC DNA]</scope>
    <source>
        <strain>C57BL/6J</strain>
    </source>
</reference>
<reference key="3">
    <citation type="journal article" date="2004" name="Genome Res.">
        <title>The status, quality, and expansion of the NIH full-length cDNA project: the Mammalian Gene Collection (MGC).</title>
        <authorList>
            <consortium name="The MGC Project Team"/>
        </authorList>
    </citation>
    <scope>NUCLEOTIDE SEQUENCE [LARGE SCALE MRNA] (ISOFORM 2)</scope>
    <source>
        <strain>FVB/N</strain>
        <tissue>Mammary tumor</tissue>
    </source>
</reference>
<reference key="4">
    <citation type="journal article" date="2005" name="Nucleic Acids Res.">
        <title>Conserved and specific functions of mammalian ssu72.</title>
        <authorList>
            <person name="St Pierre B."/>
            <person name="Liu X."/>
            <person name="Kha L.C."/>
            <person name="Zhu X."/>
            <person name="Ryan O."/>
            <person name="Jiang Z."/>
            <person name="Zacksenhaus E."/>
        </authorList>
    </citation>
    <scope>FUNCTION</scope>
    <scope>TISSUE SPECIFICITY</scope>
    <scope>DEVELOPMENTAL STAGE</scope>
</reference>
<reference key="5">
    <citation type="journal article" date="2010" name="Cell">
        <title>A tissue-specific atlas of mouse protein phosphorylation and expression.</title>
        <authorList>
            <person name="Huttlin E.L."/>
            <person name="Jedrychowski M.P."/>
            <person name="Elias J.E."/>
            <person name="Goswami T."/>
            <person name="Rad R."/>
            <person name="Beausoleil S.A."/>
            <person name="Villen J."/>
            <person name="Haas W."/>
            <person name="Sowa M.E."/>
            <person name="Gygi S.P."/>
        </authorList>
    </citation>
    <scope>IDENTIFICATION BY MASS SPECTROMETRY [LARGE SCALE ANALYSIS]</scope>
    <source>
        <tissue>Brain</tissue>
        <tissue>Brown adipose tissue</tissue>
        <tissue>Kidney</tissue>
        <tissue>Liver</tissue>
        <tissue>Lung</tissue>
        <tissue>Spleen</tissue>
        <tissue>Testis</tissue>
    </source>
</reference>
<accession>Q9CY97</accession>
<accession>Q3UF99</accession>
<accession>Q91YL1</accession>
<accession>Q9DB51</accession>
<organism>
    <name type="scientific">Mus musculus</name>
    <name type="common">Mouse</name>
    <dbReference type="NCBI Taxonomy" id="10090"/>
    <lineage>
        <taxon>Eukaryota</taxon>
        <taxon>Metazoa</taxon>
        <taxon>Chordata</taxon>
        <taxon>Craniata</taxon>
        <taxon>Vertebrata</taxon>
        <taxon>Euteleostomi</taxon>
        <taxon>Mammalia</taxon>
        <taxon>Eutheria</taxon>
        <taxon>Euarchontoglires</taxon>
        <taxon>Glires</taxon>
        <taxon>Rodentia</taxon>
        <taxon>Myomorpha</taxon>
        <taxon>Muroidea</taxon>
        <taxon>Muridae</taxon>
        <taxon>Murinae</taxon>
        <taxon>Mus</taxon>
        <taxon>Mus</taxon>
    </lineage>
</organism>
<gene>
    <name type="primary">Ssu72</name>
</gene>
<evidence type="ECO:0000250" key="1"/>
<evidence type="ECO:0000250" key="2">
    <source>
        <dbReference type="UniProtKB" id="Q9NP77"/>
    </source>
</evidence>
<evidence type="ECO:0000255" key="3"/>
<evidence type="ECO:0000269" key="4">
    <source>
    </source>
</evidence>
<evidence type="ECO:0000303" key="5">
    <source>
    </source>
</evidence>
<evidence type="ECO:0000305" key="6"/>
<feature type="chain" id="PRO_0000330013" description="RNA polymerase II subunit A C-terminal domain phosphatase SSU72">
    <location>
        <begin position="1"/>
        <end position="194"/>
    </location>
</feature>
<feature type="coiled-coil region" evidence="3">
    <location>
        <begin position="160"/>
        <end position="187"/>
    </location>
</feature>
<feature type="splice variant" id="VSP_033006" description="In isoform 2." evidence="5">
    <original>IQHTEDMENEIDELLQEFEEKSGRAFLHTVCFY</original>
    <variation>VSLSSWVLLGLLIATYKNKIK</variation>
    <location>
        <begin position="162"/>
        <end position="194"/>
    </location>
</feature>
<feature type="sequence conflict" description="In Ref. 1; BAB23890." evidence="6" ref="1">
    <original>T</original>
    <variation>P</variation>
    <location>
        <position position="59"/>
    </location>
</feature>
<keyword id="KW-0025">Alternative splicing</keyword>
<keyword id="KW-0175">Coiled coil</keyword>
<keyword id="KW-0963">Cytoplasm</keyword>
<keyword id="KW-0378">Hydrolase</keyword>
<keyword id="KW-0507">mRNA processing</keyword>
<keyword id="KW-0539">Nucleus</keyword>
<keyword id="KW-0904">Protein phosphatase</keyword>
<keyword id="KW-1185">Reference proteome</keyword>
<comment type="function">
    <text evidence="4">Protein phosphatase that catalyzes the dephosphorylation of the C-terminal domain of RNA polymerase II. Plays a role in RNA processing and termination. Plays a role in pre-mRNA polyadenylation via its interaction with SYMPK.</text>
</comment>
<comment type="catalytic activity">
    <reaction>
        <text>O-phospho-L-seryl-[protein] + H2O = L-seryl-[protein] + phosphate</text>
        <dbReference type="Rhea" id="RHEA:20629"/>
        <dbReference type="Rhea" id="RHEA-COMP:9863"/>
        <dbReference type="Rhea" id="RHEA-COMP:11604"/>
        <dbReference type="ChEBI" id="CHEBI:15377"/>
        <dbReference type="ChEBI" id="CHEBI:29999"/>
        <dbReference type="ChEBI" id="CHEBI:43474"/>
        <dbReference type="ChEBI" id="CHEBI:83421"/>
        <dbReference type="EC" id="3.1.3.16"/>
    </reaction>
</comment>
<comment type="catalytic activity">
    <reaction>
        <text>O-phospho-L-threonyl-[protein] + H2O = L-threonyl-[protein] + phosphate</text>
        <dbReference type="Rhea" id="RHEA:47004"/>
        <dbReference type="Rhea" id="RHEA-COMP:11060"/>
        <dbReference type="Rhea" id="RHEA-COMP:11605"/>
        <dbReference type="ChEBI" id="CHEBI:15377"/>
        <dbReference type="ChEBI" id="CHEBI:30013"/>
        <dbReference type="ChEBI" id="CHEBI:43474"/>
        <dbReference type="ChEBI" id="CHEBI:61977"/>
        <dbReference type="EC" id="3.1.3.16"/>
    </reaction>
</comment>
<comment type="subunit">
    <text evidence="2">Interacts with GTF2B (via C-terminus); this interaction is inhibited by SYMPK. Interacts with RB1. Interacts with CD226. Interacts with SYMPK.</text>
</comment>
<comment type="subcellular location">
    <subcellularLocation>
        <location evidence="1">Nucleus</location>
    </subcellularLocation>
    <subcellularLocation>
        <location evidence="1">Cytoplasm</location>
    </subcellularLocation>
    <text evidence="1">Predominantly in the cytosol.</text>
</comment>
<comment type="alternative products">
    <event type="alternative splicing"/>
    <isoform>
        <id>Q9CY97-1</id>
        <name>1</name>
        <sequence type="displayed"/>
    </isoform>
    <isoform>
        <id>Q9CY97-2</id>
        <name>2</name>
        <sequence type="described" ref="VSP_033006"/>
    </isoform>
</comment>
<comment type="tissue specificity">
    <text evidence="4">Highly expressed in the brain. Expressed at low level in most tissues.</text>
</comment>
<comment type="developmental stage">
    <text evidence="4">At 10.5 dpc, low level expression detected throughout the embryo with relative accumulation in spinal cord and brain folds. At 13.5 dpc, highly expressed in the CNS both in the ventricular (mitotic) and marginal (post mitotic) zones, in the PNS in dorsal root and trigeminal ganglia, and the developing gut. During development, expression in the central nervous system and peripheral nervous system persists, and expression in the intestine is further induced. Expression in the intestine is observed throughout the mucosal villi, which contains epithelial cells and other cell types. High expression is also detected in the lens. No expression is seen in other tissues such as liver, lung, bone, cardiac and skeletal muscles.</text>
</comment>
<comment type="similarity">
    <text evidence="6">Belongs to the SSU72 phosphatase family.</text>
</comment>
<dbReference type="EC" id="3.1.3.16"/>
<dbReference type="EMBL" id="AK005220">
    <property type="protein sequence ID" value="BAB23890.1"/>
    <property type="molecule type" value="mRNA"/>
</dbReference>
<dbReference type="EMBL" id="AK019168">
    <property type="protein sequence ID" value="BAB31582.1"/>
    <property type="molecule type" value="mRNA"/>
</dbReference>
<dbReference type="EMBL" id="AK148783">
    <property type="protein sequence ID" value="BAE28662.1"/>
    <property type="molecule type" value="mRNA"/>
</dbReference>
<dbReference type="EMBL" id="AL670236">
    <property type="status" value="NOT_ANNOTATED_CDS"/>
    <property type="molecule type" value="Genomic_DNA"/>
</dbReference>
<dbReference type="EMBL" id="BC016544">
    <property type="protein sequence ID" value="AAH16544.1"/>
    <property type="molecule type" value="mRNA"/>
</dbReference>
<dbReference type="CCDS" id="CCDS19036.1">
    <molecule id="Q9CY97-1"/>
</dbReference>
<dbReference type="RefSeq" id="NP_081175.2">
    <molecule id="Q9CY97-1"/>
    <property type="nucleotide sequence ID" value="NM_026899.3"/>
</dbReference>
<dbReference type="SMR" id="Q9CY97"/>
<dbReference type="FunCoup" id="Q9CY97">
    <property type="interactions" value="4042"/>
</dbReference>
<dbReference type="STRING" id="10090.ENSMUSP00000030905"/>
<dbReference type="iPTMnet" id="Q9CY97"/>
<dbReference type="PhosphoSitePlus" id="Q9CY97"/>
<dbReference type="SwissPalm" id="Q9CY97"/>
<dbReference type="PaxDb" id="10090-ENSMUSP00000030905"/>
<dbReference type="PeptideAtlas" id="Q9CY97"/>
<dbReference type="ProteomicsDB" id="254566">
    <molecule id="Q9CY97-1"/>
</dbReference>
<dbReference type="ProteomicsDB" id="254567">
    <molecule id="Q9CY97-2"/>
</dbReference>
<dbReference type="Pumba" id="Q9CY97"/>
<dbReference type="Antibodypedia" id="26440">
    <property type="antibodies" value="130 antibodies from 20 providers"/>
</dbReference>
<dbReference type="DNASU" id="68991"/>
<dbReference type="Ensembl" id="ENSMUST00000030905.9">
    <molecule id="Q9CY97-1"/>
    <property type="protein sequence ID" value="ENSMUSP00000030905.3"/>
    <property type="gene ID" value="ENSMUSG00000029038.10"/>
</dbReference>
<dbReference type="Ensembl" id="ENSMUST00000105595.2">
    <molecule id="Q9CY97-2"/>
    <property type="protein sequence ID" value="ENSMUSP00000101220.2"/>
    <property type="gene ID" value="ENSMUSG00000029038.10"/>
</dbReference>
<dbReference type="GeneID" id="68991"/>
<dbReference type="KEGG" id="mmu:68991"/>
<dbReference type="UCSC" id="uc008wek.2">
    <molecule id="Q9CY97-2"/>
    <property type="organism name" value="mouse"/>
</dbReference>
<dbReference type="UCSC" id="uc008wel.2">
    <molecule id="Q9CY97-1"/>
    <property type="organism name" value="mouse"/>
</dbReference>
<dbReference type="AGR" id="MGI:1916241"/>
<dbReference type="CTD" id="29101"/>
<dbReference type="MGI" id="MGI:1916241">
    <property type="gene designation" value="Ssu72"/>
</dbReference>
<dbReference type="VEuPathDB" id="HostDB:ENSMUSG00000029038"/>
<dbReference type="eggNOG" id="KOG2424">
    <property type="taxonomic scope" value="Eukaryota"/>
</dbReference>
<dbReference type="GeneTree" id="ENSGT00390000010165"/>
<dbReference type="HOGENOM" id="CLU_062463_2_1_1"/>
<dbReference type="InParanoid" id="Q9CY97"/>
<dbReference type="OMA" id="PNCYEFG"/>
<dbReference type="OrthoDB" id="57957at2759"/>
<dbReference type="PhylomeDB" id="Q9CY97"/>
<dbReference type="TreeFam" id="TF300194"/>
<dbReference type="Reactome" id="R-MMU-6807505">
    <property type="pathway name" value="RNA polymerase II transcribes snRNA genes"/>
</dbReference>
<dbReference type="BioGRID-ORCS" id="68991">
    <property type="hits" value="31 hits in 78 CRISPR screens"/>
</dbReference>
<dbReference type="ChiTaRS" id="Ssu72">
    <property type="organism name" value="mouse"/>
</dbReference>
<dbReference type="PRO" id="PR:Q9CY97"/>
<dbReference type="Proteomes" id="UP000000589">
    <property type="component" value="Chromosome 4"/>
</dbReference>
<dbReference type="RNAct" id="Q9CY97">
    <property type="molecule type" value="protein"/>
</dbReference>
<dbReference type="Bgee" id="ENSMUSG00000029038">
    <property type="expression patterns" value="Expressed in granulocyte and 269 other cell types or tissues"/>
</dbReference>
<dbReference type="GO" id="GO:0005829">
    <property type="term" value="C:cytosol"/>
    <property type="evidence" value="ECO:0007669"/>
    <property type="project" value="Ensembl"/>
</dbReference>
<dbReference type="GO" id="GO:0005654">
    <property type="term" value="C:nucleoplasm"/>
    <property type="evidence" value="ECO:0007669"/>
    <property type="project" value="Ensembl"/>
</dbReference>
<dbReference type="GO" id="GO:0008420">
    <property type="term" value="F:RNA polymerase II CTD heptapeptide repeat phosphatase activity"/>
    <property type="evidence" value="ECO:0000250"/>
    <property type="project" value="UniProtKB"/>
</dbReference>
<dbReference type="GO" id="GO:0180010">
    <property type="term" value="P:co-transcriptional mRNA 3'-end processing, cleavage and polyadenylation pathway"/>
    <property type="evidence" value="ECO:0000250"/>
    <property type="project" value="UniProtKB"/>
</dbReference>
<dbReference type="FunFam" id="3.40.50.2300:FF:000039">
    <property type="entry name" value="RNA polymerase II subunit A C-terminal domain phosphatase"/>
    <property type="match status" value="1"/>
</dbReference>
<dbReference type="FunFam" id="3.40.50.2300:FF:000066">
    <property type="entry name" value="RNA polymerase II subunit A C-terminal domain phosphatase SSU72"/>
    <property type="match status" value="1"/>
</dbReference>
<dbReference type="Gene3D" id="3.40.50.2300">
    <property type="match status" value="2"/>
</dbReference>
<dbReference type="InterPro" id="IPR006811">
    <property type="entry name" value="RNA_pol_II_suA"/>
</dbReference>
<dbReference type="PANTHER" id="PTHR20383">
    <property type="entry name" value="RNA POLYMERASE II SUBUNIT A C-TERMINAL DOMAIN PHOSPHATASE"/>
    <property type="match status" value="1"/>
</dbReference>
<dbReference type="Pfam" id="PF04722">
    <property type="entry name" value="Ssu72"/>
    <property type="match status" value="1"/>
</dbReference>
<sequence>MPSSPLRVAVVCSSNQNRSMEAHNILSKRGFSVRSFGTGTHVKLPGPAPDKPNVYDFKTTYDQMYNDLLRKDKELYTQNGILHMLDRNKRIKPRPERFQNCTDLFDLILTCEERVYDQVVEDLNSREQETCQPVHVVNVDIQDNHEEATLGAFLICELCQCIQHTEDMENEIDELLQEFEEKSGRAFLHTVCFY</sequence>